<organism>
    <name type="scientific">Xenopus tropicalis</name>
    <name type="common">Western clawed frog</name>
    <name type="synonym">Silurana tropicalis</name>
    <dbReference type="NCBI Taxonomy" id="8364"/>
    <lineage>
        <taxon>Eukaryota</taxon>
        <taxon>Metazoa</taxon>
        <taxon>Chordata</taxon>
        <taxon>Craniata</taxon>
        <taxon>Vertebrata</taxon>
        <taxon>Euteleostomi</taxon>
        <taxon>Amphibia</taxon>
        <taxon>Batrachia</taxon>
        <taxon>Anura</taxon>
        <taxon>Pipoidea</taxon>
        <taxon>Pipidae</taxon>
        <taxon>Xenopodinae</taxon>
        <taxon>Xenopus</taxon>
        <taxon>Silurana</taxon>
    </lineage>
</organism>
<keyword id="KW-0040">ANK repeat</keyword>
<keyword id="KW-0963">Cytoplasm</keyword>
<keyword id="KW-0539">Nucleus</keyword>
<keyword id="KW-1185">Reference proteome</keyword>
<keyword id="KW-0677">Repeat</keyword>
<sequence>MGDKEFVWAIKNGDLDAVKEFVLGGEDVNRTLDGGRKPMHYAADCGQDEVLEFLLSKGANINAADKHGITPLLSACYEGHRKCVELLLSKGADKTVKGPDGLNALESTDNQAIKDLLH</sequence>
<gene>
    <name type="primary">mtpn</name>
</gene>
<protein>
    <recommendedName>
        <fullName>Myotrophin</fullName>
    </recommendedName>
</protein>
<name>MTPN_XENTR</name>
<comment type="function">
    <text evidence="1">Regulates NF-kappa-B transcription factor activity. Promotes growth of cardiomyocytes, but not cardiomyocyte proliferation. Promotes cardiac muscle hypertrophy. Plays a role in the regulation of the growth of actin filaments. Inhibits the activity of the F-actin-capping protein complex (By similarity).</text>
</comment>
<comment type="subcellular location">
    <subcellularLocation>
        <location evidence="1">Cytoplasm</location>
    </subcellularLocation>
    <subcellularLocation>
        <location evidence="1">Nucleus</location>
    </subcellularLocation>
    <subcellularLocation>
        <location evidence="1">Cytoplasm</location>
        <location evidence="1">Perinuclear region</location>
    </subcellularLocation>
</comment>
<comment type="similarity">
    <text evidence="2">Belongs to the myotrophin family.</text>
</comment>
<accession>Q6P1S6</accession>
<evidence type="ECO:0000250" key="1"/>
<evidence type="ECO:0000305" key="2"/>
<feature type="chain" id="PRO_0000330663" description="Myotrophin">
    <location>
        <begin position="1"/>
        <end position="118"/>
    </location>
</feature>
<feature type="repeat" description="ANK 1">
    <location>
        <begin position="1"/>
        <end position="30"/>
    </location>
</feature>
<feature type="repeat" description="ANK 2">
    <location>
        <begin position="34"/>
        <end position="65"/>
    </location>
</feature>
<feature type="repeat" description="ANK 3">
    <location>
        <begin position="67"/>
        <end position="98"/>
    </location>
</feature>
<proteinExistence type="inferred from homology"/>
<reference key="1">
    <citation type="submission" date="2004-01" db="EMBL/GenBank/DDBJ databases">
        <authorList>
            <consortium name="NIH - Xenopus Gene Collection (XGC) project"/>
        </authorList>
    </citation>
    <scope>NUCLEOTIDE SEQUENCE [LARGE SCALE MRNA]</scope>
    <source>
        <tissue>Embryo</tissue>
    </source>
</reference>
<dbReference type="EMBL" id="BC064885">
    <property type="protein sequence ID" value="AAH64885.1"/>
    <property type="molecule type" value="mRNA"/>
</dbReference>
<dbReference type="RefSeq" id="NP_989406.1">
    <property type="nucleotide sequence ID" value="NM_204075.2"/>
</dbReference>
<dbReference type="SMR" id="Q6P1S6"/>
<dbReference type="FunCoup" id="Q6P1S6">
    <property type="interactions" value="3264"/>
</dbReference>
<dbReference type="STRING" id="8364.ENSXETP00000041747"/>
<dbReference type="DNASU" id="395043"/>
<dbReference type="GeneID" id="395043"/>
<dbReference type="KEGG" id="xtr:395043"/>
<dbReference type="AGR" id="Xenbase:XB-GENE-1014016"/>
<dbReference type="CTD" id="136319"/>
<dbReference type="Xenbase" id="XB-GENE-1014016">
    <property type="gene designation" value="mtpn"/>
</dbReference>
<dbReference type="InParanoid" id="Q6P1S6"/>
<dbReference type="OMA" id="TALIDCT"/>
<dbReference type="OrthoDB" id="194358at2759"/>
<dbReference type="Proteomes" id="UP000008143">
    <property type="component" value="Chromosome 3"/>
</dbReference>
<dbReference type="Bgee" id="ENSXETG00000040559">
    <property type="expression patterns" value="Expressed in skeletal muscle tissue and 16 other cell types or tissues"/>
</dbReference>
<dbReference type="GO" id="GO:0005634">
    <property type="term" value="C:nucleus"/>
    <property type="evidence" value="ECO:0007669"/>
    <property type="project" value="UniProtKB-SubCell"/>
</dbReference>
<dbReference type="GO" id="GO:0048471">
    <property type="term" value="C:perinuclear region of cytoplasm"/>
    <property type="evidence" value="ECO:0007669"/>
    <property type="project" value="UniProtKB-SubCell"/>
</dbReference>
<dbReference type="FunFam" id="1.25.40.20:FF:000118">
    <property type="entry name" value="Myotrophin"/>
    <property type="match status" value="1"/>
</dbReference>
<dbReference type="Gene3D" id="1.25.40.20">
    <property type="entry name" value="Ankyrin repeat-containing domain"/>
    <property type="match status" value="1"/>
</dbReference>
<dbReference type="InterPro" id="IPR002110">
    <property type="entry name" value="Ankyrin_rpt"/>
</dbReference>
<dbReference type="InterPro" id="IPR036770">
    <property type="entry name" value="Ankyrin_rpt-contain_sf"/>
</dbReference>
<dbReference type="PANTHER" id="PTHR24171">
    <property type="entry name" value="ANKYRIN REPEAT DOMAIN-CONTAINING PROTEIN 39-RELATED"/>
    <property type="match status" value="1"/>
</dbReference>
<dbReference type="PANTHER" id="PTHR24171:SF8">
    <property type="entry name" value="BRCA1-ASSOCIATED RING DOMAIN PROTEIN 1"/>
    <property type="match status" value="1"/>
</dbReference>
<dbReference type="Pfam" id="PF12796">
    <property type="entry name" value="Ank_2"/>
    <property type="match status" value="1"/>
</dbReference>
<dbReference type="PRINTS" id="PR01415">
    <property type="entry name" value="ANKYRIN"/>
</dbReference>
<dbReference type="SMART" id="SM00248">
    <property type="entry name" value="ANK"/>
    <property type="match status" value="3"/>
</dbReference>
<dbReference type="SUPFAM" id="SSF48403">
    <property type="entry name" value="Ankyrin repeat"/>
    <property type="match status" value="1"/>
</dbReference>
<dbReference type="PROSITE" id="PS50297">
    <property type="entry name" value="ANK_REP_REGION"/>
    <property type="match status" value="1"/>
</dbReference>
<dbReference type="PROSITE" id="PS50088">
    <property type="entry name" value="ANK_REPEAT"/>
    <property type="match status" value="2"/>
</dbReference>